<name>SLMA_SALDC</name>
<protein>
    <recommendedName>
        <fullName evidence="1">Nucleoid occlusion factor SlmA</fullName>
    </recommendedName>
</protein>
<keyword id="KW-0131">Cell cycle</keyword>
<keyword id="KW-0132">Cell division</keyword>
<keyword id="KW-0175">Coiled coil</keyword>
<keyword id="KW-0963">Cytoplasm</keyword>
<keyword id="KW-0238">DNA-binding</keyword>
<feature type="chain" id="PRO_1000188394" description="Nucleoid occlusion factor SlmA">
    <location>
        <begin position="1"/>
        <end position="198"/>
    </location>
</feature>
<feature type="domain" description="HTH tetR-type" evidence="1">
    <location>
        <begin position="10"/>
        <end position="70"/>
    </location>
</feature>
<feature type="DNA-binding region" description="H-T-H motif" evidence="1">
    <location>
        <begin position="33"/>
        <end position="52"/>
    </location>
</feature>
<feature type="coiled-coil region" evidence="1">
    <location>
        <begin position="117"/>
        <end position="144"/>
    </location>
</feature>
<proteinExistence type="inferred from homology"/>
<evidence type="ECO:0000255" key="1">
    <source>
        <dbReference type="HAMAP-Rule" id="MF_01839"/>
    </source>
</evidence>
<comment type="function">
    <text evidence="1">Required for nucleoid occlusion (NO) phenomenon, which prevents Z-ring formation and cell division over the nucleoid. Acts as a DNA-associated cell division inhibitor that binds simultaneously chromosomal DNA and FtsZ, and disrupts the assembly of FtsZ polymers. SlmA-DNA-binding sequences (SBS) are dispersed on non-Ter regions of the chromosome, preventing FtsZ polymerization at these regions.</text>
</comment>
<comment type="subunit">
    <text evidence="1">Homodimer. Interacts with FtsZ.</text>
</comment>
<comment type="subcellular location">
    <subcellularLocation>
        <location evidence="1">Cytoplasm</location>
        <location evidence="1">Nucleoid</location>
    </subcellularLocation>
</comment>
<comment type="similarity">
    <text evidence="1">Belongs to the nucleoid occlusion factor SlmA family.</text>
</comment>
<reference key="1">
    <citation type="journal article" date="2011" name="J. Bacteriol.">
        <title>Comparative genomics of 28 Salmonella enterica isolates: evidence for CRISPR-mediated adaptive sublineage evolution.</title>
        <authorList>
            <person name="Fricke W.F."/>
            <person name="Mammel M.K."/>
            <person name="McDermott P.F."/>
            <person name="Tartera C."/>
            <person name="White D.G."/>
            <person name="Leclerc J.E."/>
            <person name="Ravel J."/>
            <person name="Cebula T.A."/>
        </authorList>
    </citation>
    <scope>NUCLEOTIDE SEQUENCE [LARGE SCALE GENOMIC DNA]</scope>
    <source>
        <strain>CT_02021853</strain>
    </source>
</reference>
<dbReference type="EMBL" id="CP001144">
    <property type="protein sequence ID" value="ACH76946.1"/>
    <property type="molecule type" value="Genomic_DNA"/>
</dbReference>
<dbReference type="RefSeq" id="WP_000818606.1">
    <property type="nucleotide sequence ID" value="NC_011205.1"/>
</dbReference>
<dbReference type="SMR" id="B5FM64"/>
<dbReference type="KEGG" id="sed:SeD_A4119"/>
<dbReference type="HOGENOM" id="CLU_069356_5_0_6"/>
<dbReference type="Proteomes" id="UP000008322">
    <property type="component" value="Chromosome"/>
</dbReference>
<dbReference type="GO" id="GO:0043590">
    <property type="term" value="C:bacterial nucleoid"/>
    <property type="evidence" value="ECO:0007669"/>
    <property type="project" value="UniProtKB-UniRule"/>
</dbReference>
<dbReference type="GO" id="GO:0005737">
    <property type="term" value="C:cytoplasm"/>
    <property type="evidence" value="ECO:0007669"/>
    <property type="project" value="UniProtKB-UniRule"/>
</dbReference>
<dbReference type="GO" id="GO:0003700">
    <property type="term" value="F:DNA-binding transcription factor activity"/>
    <property type="evidence" value="ECO:0007669"/>
    <property type="project" value="TreeGrafter"/>
</dbReference>
<dbReference type="GO" id="GO:0000976">
    <property type="term" value="F:transcription cis-regulatory region binding"/>
    <property type="evidence" value="ECO:0007669"/>
    <property type="project" value="TreeGrafter"/>
</dbReference>
<dbReference type="GO" id="GO:0051301">
    <property type="term" value="P:cell division"/>
    <property type="evidence" value="ECO:0007669"/>
    <property type="project" value="UniProtKB-KW"/>
</dbReference>
<dbReference type="GO" id="GO:0010974">
    <property type="term" value="P:negative regulation of division septum assembly"/>
    <property type="evidence" value="ECO:0007669"/>
    <property type="project" value="InterPro"/>
</dbReference>
<dbReference type="FunFam" id="1.10.357.10:FF:000002">
    <property type="entry name" value="Nucleoid occlusion factor SlmA"/>
    <property type="match status" value="1"/>
</dbReference>
<dbReference type="Gene3D" id="1.10.357.10">
    <property type="entry name" value="Tetracycline Repressor, domain 2"/>
    <property type="match status" value="1"/>
</dbReference>
<dbReference type="HAMAP" id="MF_01839">
    <property type="entry name" value="NO_factor_SlmA"/>
    <property type="match status" value="1"/>
</dbReference>
<dbReference type="InterPro" id="IPR023772">
    <property type="entry name" value="DNA-bd_HTH_TetR-type_CS"/>
</dbReference>
<dbReference type="InterPro" id="IPR009057">
    <property type="entry name" value="Homeodomain-like_sf"/>
</dbReference>
<dbReference type="InterPro" id="IPR050109">
    <property type="entry name" value="HTH-type_TetR-like_transc_reg"/>
</dbReference>
<dbReference type="InterPro" id="IPR001647">
    <property type="entry name" value="HTH_TetR"/>
</dbReference>
<dbReference type="InterPro" id="IPR023769">
    <property type="entry name" value="NO_SlmA"/>
</dbReference>
<dbReference type="InterPro" id="IPR054580">
    <property type="entry name" value="SlmA-like_C"/>
</dbReference>
<dbReference type="InterPro" id="IPR036271">
    <property type="entry name" value="Tet_transcr_reg_TetR-rel_C_sf"/>
</dbReference>
<dbReference type="NCBIfam" id="NF007015">
    <property type="entry name" value="PRK09480.1"/>
    <property type="match status" value="1"/>
</dbReference>
<dbReference type="PANTHER" id="PTHR30055">
    <property type="entry name" value="HTH-TYPE TRANSCRIPTIONAL REGULATOR RUTR"/>
    <property type="match status" value="1"/>
</dbReference>
<dbReference type="PANTHER" id="PTHR30055:SF183">
    <property type="entry name" value="NUCLEOID OCCLUSION FACTOR SLMA"/>
    <property type="match status" value="1"/>
</dbReference>
<dbReference type="Pfam" id="PF22276">
    <property type="entry name" value="SlmA-like_C"/>
    <property type="match status" value="1"/>
</dbReference>
<dbReference type="Pfam" id="PF00440">
    <property type="entry name" value="TetR_N"/>
    <property type="match status" value="1"/>
</dbReference>
<dbReference type="SUPFAM" id="SSF46689">
    <property type="entry name" value="Homeodomain-like"/>
    <property type="match status" value="1"/>
</dbReference>
<dbReference type="SUPFAM" id="SSF48498">
    <property type="entry name" value="Tetracyclin repressor-like, C-terminal domain"/>
    <property type="match status" value="1"/>
</dbReference>
<dbReference type="PROSITE" id="PS01081">
    <property type="entry name" value="HTH_TETR_1"/>
    <property type="match status" value="1"/>
</dbReference>
<dbReference type="PROSITE" id="PS50977">
    <property type="entry name" value="HTH_TETR_2"/>
    <property type="match status" value="1"/>
</dbReference>
<accession>B5FM64</accession>
<sequence length="198" mass="22896">MAEKQTAKRNRREEILQSLALMLESSDGSQRITTAKLAASVGVSEAALYRHFPSKTRMFDSLIEFIEDSLITRINLILKDEKNTSTRLRLIMLLILGFGERNPGLTRILTGHALMFEQDRLQGRINQLFERIEAQLRQVLREKRMREGEGYTTDENLLASQLLAFCEGMLSRFVRSEFKYRPTDDFDARWPLIAAQLQ</sequence>
<organism>
    <name type="scientific">Salmonella dublin (strain CT_02021853)</name>
    <dbReference type="NCBI Taxonomy" id="439851"/>
    <lineage>
        <taxon>Bacteria</taxon>
        <taxon>Pseudomonadati</taxon>
        <taxon>Pseudomonadota</taxon>
        <taxon>Gammaproteobacteria</taxon>
        <taxon>Enterobacterales</taxon>
        <taxon>Enterobacteriaceae</taxon>
        <taxon>Salmonella</taxon>
    </lineage>
</organism>
<gene>
    <name evidence="1" type="primary">slmA</name>
    <name type="ordered locus">SeD_A4119</name>
</gene>